<reference key="1">
    <citation type="journal article" date="2008" name="J. Bacteriol.">
        <title>Complete genome sequence of the soil actinomycete Kocuria rhizophila.</title>
        <authorList>
            <person name="Takarada H."/>
            <person name="Sekine M."/>
            <person name="Kosugi H."/>
            <person name="Matsuo Y."/>
            <person name="Fujisawa T."/>
            <person name="Omata S."/>
            <person name="Kishi E."/>
            <person name="Shimizu A."/>
            <person name="Tsukatani N."/>
            <person name="Tanikawa S."/>
            <person name="Fujita N."/>
            <person name="Harayama S."/>
        </authorList>
    </citation>
    <scope>NUCLEOTIDE SEQUENCE [LARGE SCALE GENOMIC DNA]</scope>
    <source>
        <strain>ATCC 9341 / DSM 348 / NBRC 103217 / DC2201</strain>
    </source>
</reference>
<organism>
    <name type="scientific">Kocuria rhizophila (strain ATCC 9341 / DSM 348 / NBRC 103217 / DC2201)</name>
    <dbReference type="NCBI Taxonomy" id="378753"/>
    <lineage>
        <taxon>Bacteria</taxon>
        <taxon>Bacillati</taxon>
        <taxon>Actinomycetota</taxon>
        <taxon>Actinomycetes</taxon>
        <taxon>Micrococcales</taxon>
        <taxon>Micrococcaceae</taxon>
        <taxon>Kocuria</taxon>
    </lineage>
</organism>
<proteinExistence type="inferred from homology"/>
<protein>
    <recommendedName>
        <fullName evidence="1">Small ribosomal subunit protein uS15</fullName>
    </recommendedName>
    <alternativeName>
        <fullName evidence="2">30S ribosomal protein S15</fullName>
    </alternativeName>
</protein>
<sequence length="89" mass="10414">MALDAAIKNQIITEYATHEGDTGSPEVQIAVLSRRISDLTEHLKMHKHDHHTRRGLMALVGRRRRMLDYLRRTDIARYRALIERLGLRK</sequence>
<dbReference type="EMBL" id="AP009152">
    <property type="protein sequence ID" value="BAG29943.1"/>
    <property type="molecule type" value="Genomic_DNA"/>
</dbReference>
<dbReference type="RefSeq" id="WP_012398664.1">
    <property type="nucleotide sequence ID" value="NZ_VECX01000008.1"/>
</dbReference>
<dbReference type="SMR" id="B2GKI4"/>
<dbReference type="STRING" id="378753.KRH_15960"/>
<dbReference type="KEGG" id="krh:KRH_15960"/>
<dbReference type="eggNOG" id="COG0184">
    <property type="taxonomic scope" value="Bacteria"/>
</dbReference>
<dbReference type="HOGENOM" id="CLU_148518_0_0_11"/>
<dbReference type="OrthoDB" id="9799262at2"/>
<dbReference type="Proteomes" id="UP000008838">
    <property type="component" value="Chromosome"/>
</dbReference>
<dbReference type="GO" id="GO:0022627">
    <property type="term" value="C:cytosolic small ribosomal subunit"/>
    <property type="evidence" value="ECO:0007669"/>
    <property type="project" value="TreeGrafter"/>
</dbReference>
<dbReference type="GO" id="GO:0019843">
    <property type="term" value="F:rRNA binding"/>
    <property type="evidence" value="ECO:0007669"/>
    <property type="project" value="UniProtKB-UniRule"/>
</dbReference>
<dbReference type="GO" id="GO:0003735">
    <property type="term" value="F:structural constituent of ribosome"/>
    <property type="evidence" value="ECO:0007669"/>
    <property type="project" value="InterPro"/>
</dbReference>
<dbReference type="GO" id="GO:0006412">
    <property type="term" value="P:translation"/>
    <property type="evidence" value="ECO:0007669"/>
    <property type="project" value="UniProtKB-UniRule"/>
</dbReference>
<dbReference type="CDD" id="cd00353">
    <property type="entry name" value="Ribosomal_S15p_S13e"/>
    <property type="match status" value="1"/>
</dbReference>
<dbReference type="FunFam" id="1.10.287.10:FF:000002">
    <property type="entry name" value="30S ribosomal protein S15"/>
    <property type="match status" value="1"/>
</dbReference>
<dbReference type="Gene3D" id="6.10.250.3130">
    <property type="match status" value="1"/>
</dbReference>
<dbReference type="Gene3D" id="1.10.287.10">
    <property type="entry name" value="S15/NS1, RNA-binding"/>
    <property type="match status" value="1"/>
</dbReference>
<dbReference type="HAMAP" id="MF_01343_B">
    <property type="entry name" value="Ribosomal_uS15_B"/>
    <property type="match status" value="1"/>
</dbReference>
<dbReference type="InterPro" id="IPR000589">
    <property type="entry name" value="Ribosomal_uS15"/>
</dbReference>
<dbReference type="InterPro" id="IPR005290">
    <property type="entry name" value="Ribosomal_uS15_bac-type"/>
</dbReference>
<dbReference type="InterPro" id="IPR009068">
    <property type="entry name" value="uS15_NS1_RNA-bd_sf"/>
</dbReference>
<dbReference type="NCBIfam" id="TIGR00952">
    <property type="entry name" value="S15_bact"/>
    <property type="match status" value="1"/>
</dbReference>
<dbReference type="PANTHER" id="PTHR23321">
    <property type="entry name" value="RIBOSOMAL PROTEIN S15, BACTERIAL AND ORGANELLAR"/>
    <property type="match status" value="1"/>
</dbReference>
<dbReference type="PANTHER" id="PTHR23321:SF26">
    <property type="entry name" value="SMALL RIBOSOMAL SUBUNIT PROTEIN US15M"/>
    <property type="match status" value="1"/>
</dbReference>
<dbReference type="Pfam" id="PF00312">
    <property type="entry name" value="Ribosomal_S15"/>
    <property type="match status" value="1"/>
</dbReference>
<dbReference type="SMART" id="SM01387">
    <property type="entry name" value="Ribosomal_S15"/>
    <property type="match status" value="1"/>
</dbReference>
<dbReference type="SUPFAM" id="SSF47060">
    <property type="entry name" value="S15/NS1 RNA-binding domain"/>
    <property type="match status" value="1"/>
</dbReference>
<dbReference type="PROSITE" id="PS00362">
    <property type="entry name" value="RIBOSOMAL_S15"/>
    <property type="match status" value="1"/>
</dbReference>
<feature type="chain" id="PRO_1000143130" description="Small ribosomal subunit protein uS15">
    <location>
        <begin position="1"/>
        <end position="89"/>
    </location>
</feature>
<name>RS15_KOCRD</name>
<keyword id="KW-1185">Reference proteome</keyword>
<keyword id="KW-0687">Ribonucleoprotein</keyword>
<keyword id="KW-0689">Ribosomal protein</keyword>
<keyword id="KW-0694">RNA-binding</keyword>
<keyword id="KW-0699">rRNA-binding</keyword>
<accession>B2GKI4</accession>
<evidence type="ECO:0000255" key="1">
    <source>
        <dbReference type="HAMAP-Rule" id="MF_01343"/>
    </source>
</evidence>
<evidence type="ECO:0000305" key="2"/>
<comment type="function">
    <text evidence="1">One of the primary rRNA binding proteins, it binds directly to 16S rRNA where it helps nucleate assembly of the platform of the 30S subunit by binding and bridging several RNA helices of the 16S rRNA.</text>
</comment>
<comment type="function">
    <text evidence="1">Forms an intersubunit bridge (bridge B4) with the 23S rRNA of the 50S subunit in the ribosome.</text>
</comment>
<comment type="subunit">
    <text evidence="1">Part of the 30S ribosomal subunit. Forms a bridge to the 50S subunit in the 70S ribosome, contacting the 23S rRNA.</text>
</comment>
<comment type="similarity">
    <text evidence="1">Belongs to the universal ribosomal protein uS15 family.</text>
</comment>
<gene>
    <name evidence="1" type="primary">rpsO</name>
    <name type="ordered locus">KRH_15960</name>
</gene>